<protein>
    <recommendedName>
        <fullName evidence="1">Translation initiation factor IF-1</fullName>
    </recommendedName>
</protein>
<evidence type="ECO:0000255" key="1">
    <source>
        <dbReference type="HAMAP-Rule" id="MF_00075"/>
    </source>
</evidence>
<accession>A1A091</accession>
<comment type="function">
    <text evidence="1">One of the essential components for the initiation of protein synthesis. Stabilizes the binding of IF-2 and IF-3 on the 30S subunit to which N-formylmethionyl-tRNA(fMet) subsequently binds. Helps modulate mRNA selection, yielding the 30S pre-initiation complex (PIC). Upon addition of the 50S ribosomal subunit IF-1, IF-2 and IF-3 are released leaving the mature 70S translation initiation complex.</text>
</comment>
<comment type="subunit">
    <text evidence="1">Component of the 30S ribosomal translation pre-initiation complex which assembles on the 30S ribosome in the order IF-2 and IF-3, IF-1 and N-formylmethionyl-tRNA(fMet); mRNA recruitment can occur at any time during PIC assembly.</text>
</comment>
<comment type="subcellular location">
    <subcellularLocation>
        <location evidence="1">Cytoplasm</location>
    </subcellularLocation>
</comment>
<comment type="similarity">
    <text evidence="1">Belongs to the IF-1 family.</text>
</comment>
<name>IF1_BIFAA</name>
<sequence length="72" mass="8378">MAKDGVIEVEGQVVEALPNAMFRVELENKHIVLATISGKMRKNYIRILPQDRVVLEMSPYDLNRGRITYRYK</sequence>
<reference key="1">
    <citation type="submission" date="2006-12" db="EMBL/GenBank/DDBJ databases">
        <title>Bifidobacterium adolescentis complete genome sequence.</title>
        <authorList>
            <person name="Suzuki T."/>
            <person name="Tsuda Y."/>
            <person name="Kanou N."/>
            <person name="Inoue T."/>
            <person name="Kumazaki K."/>
            <person name="Nagano S."/>
            <person name="Hirai S."/>
            <person name="Tanaka K."/>
            <person name="Watanabe K."/>
        </authorList>
    </citation>
    <scope>NUCLEOTIDE SEQUENCE [LARGE SCALE GENOMIC DNA]</scope>
    <source>
        <strain>ATCC 15703 / DSM 20083 / NCTC 11814 / E194a</strain>
    </source>
</reference>
<feature type="chain" id="PRO_0000338771" description="Translation initiation factor IF-1">
    <location>
        <begin position="1"/>
        <end position="72"/>
    </location>
</feature>
<feature type="domain" description="S1-like" evidence="1">
    <location>
        <begin position="1"/>
        <end position="72"/>
    </location>
</feature>
<dbReference type="EMBL" id="AP009256">
    <property type="protein sequence ID" value="BAF39124.1"/>
    <property type="molecule type" value="Genomic_DNA"/>
</dbReference>
<dbReference type="RefSeq" id="WP_003808114.1">
    <property type="nucleotide sequence ID" value="NZ_CAXVNC010000001.1"/>
</dbReference>
<dbReference type="SMR" id="A1A091"/>
<dbReference type="STRING" id="367928.BAD_0343"/>
<dbReference type="PaxDb" id="1680-BADO_0350"/>
<dbReference type="GeneID" id="97501887"/>
<dbReference type="KEGG" id="bad:BAD_0343"/>
<dbReference type="HOGENOM" id="CLU_151267_1_0_11"/>
<dbReference type="Proteomes" id="UP000008702">
    <property type="component" value="Chromosome"/>
</dbReference>
<dbReference type="GO" id="GO:0005829">
    <property type="term" value="C:cytosol"/>
    <property type="evidence" value="ECO:0007669"/>
    <property type="project" value="TreeGrafter"/>
</dbReference>
<dbReference type="GO" id="GO:0043022">
    <property type="term" value="F:ribosome binding"/>
    <property type="evidence" value="ECO:0007669"/>
    <property type="project" value="UniProtKB-UniRule"/>
</dbReference>
<dbReference type="GO" id="GO:0019843">
    <property type="term" value="F:rRNA binding"/>
    <property type="evidence" value="ECO:0007669"/>
    <property type="project" value="UniProtKB-UniRule"/>
</dbReference>
<dbReference type="GO" id="GO:0003743">
    <property type="term" value="F:translation initiation factor activity"/>
    <property type="evidence" value="ECO:0007669"/>
    <property type="project" value="UniProtKB-UniRule"/>
</dbReference>
<dbReference type="CDD" id="cd04451">
    <property type="entry name" value="S1_IF1"/>
    <property type="match status" value="1"/>
</dbReference>
<dbReference type="FunFam" id="2.40.50.140:FF:000002">
    <property type="entry name" value="Translation initiation factor IF-1"/>
    <property type="match status" value="1"/>
</dbReference>
<dbReference type="Gene3D" id="2.40.50.140">
    <property type="entry name" value="Nucleic acid-binding proteins"/>
    <property type="match status" value="1"/>
</dbReference>
<dbReference type="HAMAP" id="MF_00075">
    <property type="entry name" value="IF_1"/>
    <property type="match status" value="1"/>
</dbReference>
<dbReference type="InterPro" id="IPR012340">
    <property type="entry name" value="NA-bd_OB-fold"/>
</dbReference>
<dbReference type="InterPro" id="IPR006196">
    <property type="entry name" value="RNA-binding_domain_S1_IF1"/>
</dbReference>
<dbReference type="InterPro" id="IPR004368">
    <property type="entry name" value="TIF_IF1"/>
</dbReference>
<dbReference type="NCBIfam" id="TIGR00008">
    <property type="entry name" value="infA"/>
    <property type="match status" value="1"/>
</dbReference>
<dbReference type="PANTHER" id="PTHR33370">
    <property type="entry name" value="TRANSLATION INITIATION FACTOR IF-1, CHLOROPLASTIC"/>
    <property type="match status" value="1"/>
</dbReference>
<dbReference type="PANTHER" id="PTHR33370:SF1">
    <property type="entry name" value="TRANSLATION INITIATION FACTOR IF-1, CHLOROPLASTIC"/>
    <property type="match status" value="1"/>
</dbReference>
<dbReference type="Pfam" id="PF01176">
    <property type="entry name" value="eIF-1a"/>
    <property type="match status" value="1"/>
</dbReference>
<dbReference type="SUPFAM" id="SSF50249">
    <property type="entry name" value="Nucleic acid-binding proteins"/>
    <property type="match status" value="1"/>
</dbReference>
<dbReference type="PROSITE" id="PS50832">
    <property type="entry name" value="S1_IF1_TYPE"/>
    <property type="match status" value="1"/>
</dbReference>
<gene>
    <name evidence="1" type="primary">infA</name>
    <name type="ordered locus">BAD_0343</name>
</gene>
<organism>
    <name type="scientific">Bifidobacterium adolescentis (strain ATCC 15703 / DSM 20083 / NCTC 11814 / E194a)</name>
    <dbReference type="NCBI Taxonomy" id="367928"/>
    <lineage>
        <taxon>Bacteria</taxon>
        <taxon>Bacillati</taxon>
        <taxon>Actinomycetota</taxon>
        <taxon>Actinomycetes</taxon>
        <taxon>Bifidobacteriales</taxon>
        <taxon>Bifidobacteriaceae</taxon>
        <taxon>Bifidobacterium</taxon>
    </lineage>
</organism>
<proteinExistence type="inferred from homology"/>
<keyword id="KW-0963">Cytoplasm</keyword>
<keyword id="KW-0396">Initiation factor</keyword>
<keyword id="KW-0648">Protein biosynthesis</keyword>
<keyword id="KW-1185">Reference proteome</keyword>
<keyword id="KW-0694">RNA-binding</keyword>
<keyword id="KW-0699">rRNA-binding</keyword>